<protein>
    <recommendedName>
        <fullName evidence="1">Ribosomal RNA large subunit methyltransferase F</fullName>
        <ecNumber evidence="1">2.1.1.181</ecNumber>
    </recommendedName>
    <alternativeName>
        <fullName evidence="1">23S rRNA mA1618 methyltransferase</fullName>
    </alternativeName>
    <alternativeName>
        <fullName evidence="1">rRNA adenine N-6-methyltransferase</fullName>
    </alternativeName>
</protein>
<proteinExistence type="inferred from homology"/>
<feature type="chain" id="PRO_0000349923" description="Ribosomal RNA large subunit methyltransferase F">
    <location>
        <begin position="1"/>
        <end position="330"/>
    </location>
</feature>
<name>RLMF_PSEA6</name>
<organism>
    <name type="scientific">Pseudoalteromonas atlantica (strain T6c / ATCC BAA-1087)</name>
    <dbReference type="NCBI Taxonomy" id="3042615"/>
    <lineage>
        <taxon>Bacteria</taxon>
        <taxon>Pseudomonadati</taxon>
        <taxon>Pseudomonadota</taxon>
        <taxon>Gammaproteobacteria</taxon>
        <taxon>Alteromonadales</taxon>
        <taxon>Alteromonadaceae</taxon>
        <taxon>Paraglaciecola</taxon>
    </lineage>
</organism>
<comment type="function">
    <text evidence="1">Specifically methylates the adenine in position 1618 of 23S rRNA.</text>
</comment>
<comment type="catalytic activity">
    <reaction evidence="1">
        <text>adenosine(1618) in 23S rRNA + S-adenosyl-L-methionine = N(6)-methyladenosine(1618) in 23S rRNA + S-adenosyl-L-homocysteine + H(+)</text>
        <dbReference type="Rhea" id="RHEA:16497"/>
        <dbReference type="Rhea" id="RHEA-COMP:10229"/>
        <dbReference type="Rhea" id="RHEA-COMP:10231"/>
        <dbReference type="ChEBI" id="CHEBI:15378"/>
        <dbReference type="ChEBI" id="CHEBI:57856"/>
        <dbReference type="ChEBI" id="CHEBI:59789"/>
        <dbReference type="ChEBI" id="CHEBI:74411"/>
        <dbReference type="ChEBI" id="CHEBI:74449"/>
        <dbReference type="EC" id="2.1.1.181"/>
    </reaction>
</comment>
<comment type="subcellular location">
    <subcellularLocation>
        <location evidence="1">Cytoplasm</location>
    </subcellularLocation>
</comment>
<comment type="similarity">
    <text evidence="1">Belongs to the methyltransferase superfamily. METTL16/RlmF family.</text>
</comment>
<evidence type="ECO:0000255" key="1">
    <source>
        <dbReference type="HAMAP-Rule" id="MF_01848"/>
    </source>
</evidence>
<keyword id="KW-0963">Cytoplasm</keyword>
<keyword id="KW-0489">Methyltransferase</keyword>
<keyword id="KW-0698">rRNA processing</keyword>
<keyword id="KW-0949">S-adenosyl-L-methionine</keyword>
<keyword id="KW-0808">Transferase</keyword>
<accession>Q15VI3</accession>
<reference key="1">
    <citation type="submission" date="2006-06" db="EMBL/GenBank/DDBJ databases">
        <title>Complete sequence of Pseudoalteromonas atlantica T6c.</title>
        <authorList>
            <consortium name="US DOE Joint Genome Institute"/>
            <person name="Copeland A."/>
            <person name="Lucas S."/>
            <person name="Lapidus A."/>
            <person name="Barry K."/>
            <person name="Detter J.C."/>
            <person name="Glavina del Rio T."/>
            <person name="Hammon N."/>
            <person name="Israni S."/>
            <person name="Dalin E."/>
            <person name="Tice H."/>
            <person name="Pitluck S."/>
            <person name="Saunders E."/>
            <person name="Brettin T."/>
            <person name="Bruce D."/>
            <person name="Han C."/>
            <person name="Tapia R."/>
            <person name="Gilna P."/>
            <person name="Schmutz J."/>
            <person name="Larimer F."/>
            <person name="Land M."/>
            <person name="Hauser L."/>
            <person name="Kyrpides N."/>
            <person name="Kim E."/>
            <person name="Karls A.C."/>
            <person name="Bartlett D."/>
            <person name="Higgins B.P."/>
            <person name="Richardson P."/>
        </authorList>
    </citation>
    <scope>NUCLEOTIDE SEQUENCE [LARGE SCALE GENOMIC DNA]</scope>
    <source>
        <strain>T6c / ATCC BAA-1087</strain>
    </source>
</reference>
<dbReference type="EC" id="2.1.1.181" evidence="1"/>
<dbReference type="EMBL" id="CP000388">
    <property type="protein sequence ID" value="ABG40105.1"/>
    <property type="molecule type" value="Genomic_DNA"/>
</dbReference>
<dbReference type="SMR" id="Q15VI3"/>
<dbReference type="STRING" id="342610.Patl_1583"/>
<dbReference type="KEGG" id="pat:Patl_1583"/>
<dbReference type="eggNOG" id="COG3129">
    <property type="taxonomic scope" value="Bacteria"/>
</dbReference>
<dbReference type="HOGENOM" id="CLU_027534_3_0_6"/>
<dbReference type="OrthoDB" id="1115728at2"/>
<dbReference type="Proteomes" id="UP000001981">
    <property type="component" value="Chromosome"/>
</dbReference>
<dbReference type="GO" id="GO:0005737">
    <property type="term" value="C:cytoplasm"/>
    <property type="evidence" value="ECO:0007669"/>
    <property type="project" value="UniProtKB-SubCell"/>
</dbReference>
<dbReference type="GO" id="GO:0052907">
    <property type="term" value="F:23S rRNA (adenine(1618)-N(6))-methyltransferase activity"/>
    <property type="evidence" value="ECO:0007669"/>
    <property type="project" value="UniProtKB-EC"/>
</dbReference>
<dbReference type="GO" id="GO:0070475">
    <property type="term" value="P:rRNA base methylation"/>
    <property type="evidence" value="ECO:0007669"/>
    <property type="project" value="TreeGrafter"/>
</dbReference>
<dbReference type="Gene3D" id="3.40.50.150">
    <property type="entry name" value="Vaccinia Virus protein VP39"/>
    <property type="match status" value="1"/>
</dbReference>
<dbReference type="HAMAP" id="MF_01848">
    <property type="entry name" value="23SrRNA_methyltr_F"/>
    <property type="match status" value="1"/>
</dbReference>
<dbReference type="InterPro" id="IPR010286">
    <property type="entry name" value="METTL16/RlmF"/>
</dbReference>
<dbReference type="InterPro" id="IPR016909">
    <property type="entry name" value="rRNA_lsu_MeTfrase_F"/>
</dbReference>
<dbReference type="InterPro" id="IPR029063">
    <property type="entry name" value="SAM-dependent_MTases_sf"/>
</dbReference>
<dbReference type="NCBIfam" id="NF008725">
    <property type="entry name" value="PRK11727.1"/>
    <property type="match status" value="1"/>
</dbReference>
<dbReference type="PANTHER" id="PTHR13393:SF0">
    <property type="entry name" value="RNA N6-ADENOSINE-METHYLTRANSFERASE METTL16"/>
    <property type="match status" value="1"/>
</dbReference>
<dbReference type="PANTHER" id="PTHR13393">
    <property type="entry name" value="SAM-DEPENDENT METHYLTRANSFERASE"/>
    <property type="match status" value="1"/>
</dbReference>
<dbReference type="Pfam" id="PF05971">
    <property type="entry name" value="Methyltransf_10"/>
    <property type="match status" value="1"/>
</dbReference>
<dbReference type="PIRSF" id="PIRSF029038">
    <property type="entry name" value="Mtase_YbiN_prd"/>
    <property type="match status" value="1"/>
</dbReference>
<dbReference type="SUPFAM" id="SSF53335">
    <property type="entry name" value="S-adenosyl-L-methionine-dependent methyltransferases"/>
    <property type="match status" value="1"/>
</dbReference>
<gene>
    <name evidence="1" type="primary">rlmF</name>
    <name type="ordered locus">Patl_1583</name>
</gene>
<sequence>MTITTTVKAKTLAVNNKNAPHTSATMHPRNVHRNGYPMSALCQSYPTLEAHVIKAKSGQQSIDFSKAASVKALNAALLIHYYGLNMWDIPEGYLCPPVPGRADYIHGLADLLAKDNKGVVPTGNRVIGLDIGVGANAIYPIIGSQTYGWDFVGSDIDDVALKSATTLANNNPKLKPLLAVRKQHDKAYIFAGIIQPDDHFTFSLCNPPFHKSAEEAAMGSLRKVKGLGRNKQKSNNTGNAQPITANKLNFAGQSNELWCDGGELAFIQRMIKESVEYQSQVGWFTCLVSKSLHLKAIETSARYFGAKQFMKVDMGQGQKISRFVAWKFRD</sequence>